<protein>
    <recommendedName>
        <fullName evidence="1">N-(5'-phosphoribosyl)anthranilate isomerase</fullName>
        <shortName evidence="1">PRAI</shortName>
        <ecNumber evidence="1">5.3.1.24</ecNumber>
    </recommendedName>
</protein>
<dbReference type="EC" id="5.3.1.24" evidence="1"/>
<dbReference type="EMBL" id="CP000814">
    <property type="protein sequence ID" value="ABV51923.1"/>
    <property type="molecule type" value="Genomic_DNA"/>
</dbReference>
<dbReference type="RefSeq" id="WP_002866645.1">
    <property type="nucleotide sequence ID" value="NC_009839.1"/>
</dbReference>
<dbReference type="SMR" id="A8FKD6"/>
<dbReference type="KEGG" id="cju:C8J_0324"/>
<dbReference type="HOGENOM" id="CLU_076364_2_0_7"/>
<dbReference type="UniPathway" id="UPA00035">
    <property type="reaction ID" value="UER00042"/>
</dbReference>
<dbReference type="GO" id="GO:0004640">
    <property type="term" value="F:phosphoribosylanthranilate isomerase activity"/>
    <property type="evidence" value="ECO:0007669"/>
    <property type="project" value="UniProtKB-UniRule"/>
</dbReference>
<dbReference type="GO" id="GO:0000162">
    <property type="term" value="P:L-tryptophan biosynthetic process"/>
    <property type="evidence" value="ECO:0007669"/>
    <property type="project" value="UniProtKB-UniRule"/>
</dbReference>
<dbReference type="CDD" id="cd00405">
    <property type="entry name" value="PRAI"/>
    <property type="match status" value="1"/>
</dbReference>
<dbReference type="Gene3D" id="3.20.20.70">
    <property type="entry name" value="Aldolase class I"/>
    <property type="match status" value="1"/>
</dbReference>
<dbReference type="HAMAP" id="MF_00135">
    <property type="entry name" value="PRAI"/>
    <property type="match status" value="1"/>
</dbReference>
<dbReference type="InterPro" id="IPR013785">
    <property type="entry name" value="Aldolase_TIM"/>
</dbReference>
<dbReference type="InterPro" id="IPR001240">
    <property type="entry name" value="PRAI_dom"/>
</dbReference>
<dbReference type="InterPro" id="IPR011060">
    <property type="entry name" value="RibuloseP-bd_barrel"/>
</dbReference>
<dbReference type="InterPro" id="IPR044643">
    <property type="entry name" value="TrpF_fam"/>
</dbReference>
<dbReference type="PANTHER" id="PTHR42894">
    <property type="entry name" value="N-(5'-PHOSPHORIBOSYL)ANTHRANILATE ISOMERASE"/>
    <property type="match status" value="1"/>
</dbReference>
<dbReference type="PANTHER" id="PTHR42894:SF1">
    <property type="entry name" value="N-(5'-PHOSPHORIBOSYL)ANTHRANILATE ISOMERASE"/>
    <property type="match status" value="1"/>
</dbReference>
<dbReference type="Pfam" id="PF00697">
    <property type="entry name" value="PRAI"/>
    <property type="match status" value="1"/>
</dbReference>
<dbReference type="SUPFAM" id="SSF51366">
    <property type="entry name" value="Ribulose-phoshate binding barrel"/>
    <property type="match status" value="1"/>
</dbReference>
<name>TRPF_CAMJ8</name>
<proteinExistence type="inferred from homology"/>
<reference key="1">
    <citation type="journal article" date="2007" name="J. Bacteriol.">
        <title>The complete genome sequence of Campylobacter jejuni strain 81116 (NCTC11828).</title>
        <authorList>
            <person name="Pearson B.M."/>
            <person name="Gaskin D.J.H."/>
            <person name="Segers R.P.A.M."/>
            <person name="Wells J.M."/>
            <person name="Nuijten P.J.M."/>
            <person name="van Vliet A.H.M."/>
        </authorList>
    </citation>
    <scope>NUCLEOTIDE SEQUENCE [LARGE SCALE GENOMIC DNA]</scope>
    <source>
        <strain>81116 / NCTC 11828</strain>
    </source>
</reference>
<feature type="chain" id="PRO_1000197087" description="N-(5'-phosphoribosyl)anthranilate isomerase">
    <location>
        <begin position="1"/>
        <end position="199"/>
    </location>
</feature>
<organism>
    <name type="scientific">Campylobacter jejuni subsp. jejuni serotype O:6 (strain 81116 / NCTC 11828)</name>
    <dbReference type="NCBI Taxonomy" id="407148"/>
    <lineage>
        <taxon>Bacteria</taxon>
        <taxon>Pseudomonadati</taxon>
        <taxon>Campylobacterota</taxon>
        <taxon>Epsilonproteobacteria</taxon>
        <taxon>Campylobacterales</taxon>
        <taxon>Campylobacteraceae</taxon>
        <taxon>Campylobacter</taxon>
    </lineage>
</organism>
<evidence type="ECO:0000255" key="1">
    <source>
        <dbReference type="HAMAP-Rule" id="MF_00135"/>
    </source>
</evidence>
<sequence length="199" mass="22515">MLKLKICGIKDEKNAKDLAFLNIDFFGFIFAKSPRRVSLEQARNLSAIFHEKDKKVVGVFVDENLEQILRCIKEAKLDGIQIYRTITKEEFEILKVQNVFVWQVISVENSLDLKSEIFANLVLFDAKGILKGGNGISFDWTLLGSYTKDFILAGGIGLDNVHKAVQTGAKILDLNSKLEDEKGLKDINKIKQILKELKK</sequence>
<comment type="catalytic activity">
    <reaction evidence="1">
        <text>N-(5-phospho-beta-D-ribosyl)anthranilate = 1-(2-carboxyphenylamino)-1-deoxy-D-ribulose 5-phosphate</text>
        <dbReference type="Rhea" id="RHEA:21540"/>
        <dbReference type="ChEBI" id="CHEBI:18277"/>
        <dbReference type="ChEBI" id="CHEBI:58613"/>
        <dbReference type="EC" id="5.3.1.24"/>
    </reaction>
</comment>
<comment type="pathway">
    <text evidence="1">Amino-acid biosynthesis; L-tryptophan biosynthesis; L-tryptophan from chorismate: step 3/5.</text>
</comment>
<comment type="similarity">
    <text evidence="1">Belongs to the TrpF family.</text>
</comment>
<accession>A8FKD6</accession>
<gene>
    <name evidence="1" type="primary">trpF</name>
    <name type="ordered locus">C8J_0324</name>
</gene>
<keyword id="KW-0028">Amino-acid biosynthesis</keyword>
<keyword id="KW-0057">Aromatic amino acid biosynthesis</keyword>
<keyword id="KW-0413">Isomerase</keyword>
<keyword id="KW-0822">Tryptophan biosynthesis</keyword>